<feature type="chain" id="PRO_1000083437" description="Phosphopentomutase">
    <location>
        <begin position="1"/>
        <end position="407"/>
    </location>
</feature>
<feature type="binding site" evidence="1">
    <location>
        <position position="10"/>
    </location>
    <ligand>
        <name>Mn(2+)</name>
        <dbReference type="ChEBI" id="CHEBI:29035"/>
        <label>1</label>
    </ligand>
</feature>
<feature type="binding site" evidence="1">
    <location>
        <position position="306"/>
    </location>
    <ligand>
        <name>Mn(2+)</name>
        <dbReference type="ChEBI" id="CHEBI:29035"/>
        <label>2</label>
    </ligand>
</feature>
<feature type="binding site" evidence="1">
    <location>
        <position position="311"/>
    </location>
    <ligand>
        <name>Mn(2+)</name>
        <dbReference type="ChEBI" id="CHEBI:29035"/>
        <label>2</label>
    </ligand>
</feature>
<feature type="binding site" evidence="1">
    <location>
        <position position="347"/>
    </location>
    <ligand>
        <name>Mn(2+)</name>
        <dbReference type="ChEBI" id="CHEBI:29035"/>
        <label>1</label>
    </ligand>
</feature>
<feature type="binding site" evidence="1">
    <location>
        <position position="348"/>
    </location>
    <ligand>
        <name>Mn(2+)</name>
        <dbReference type="ChEBI" id="CHEBI:29035"/>
        <label>1</label>
    </ligand>
</feature>
<feature type="binding site" evidence="1">
    <location>
        <position position="359"/>
    </location>
    <ligand>
        <name>Mn(2+)</name>
        <dbReference type="ChEBI" id="CHEBI:29035"/>
        <label>2</label>
    </ligand>
</feature>
<reference key="1">
    <citation type="submission" date="2008-02" db="EMBL/GenBank/DDBJ databases">
        <title>Complete sequence of Escherichia coli C str. ATCC 8739.</title>
        <authorList>
            <person name="Copeland A."/>
            <person name="Lucas S."/>
            <person name="Lapidus A."/>
            <person name="Glavina del Rio T."/>
            <person name="Dalin E."/>
            <person name="Tice H."/>
            <person name="Bruce D."/>
            <person name="Goodwin L."/>
            <person name="Pitluck S."/>
            <person name="Kiss H."/>
            <person name="Brettin T."/>
            <person name="Detter J.C."/>
            <person name="Han C."/>
            <person name="Kuske C.R."/>
            <person name="Schmutz J."/>
            <person name="Larimer F."/>
            <person name="Land M."/>
            <person name="Hauser L."/>
            <person name="Kyrpides N."/>
            <person name="Mikhailova N."/>
            <person name="Ingram L."/>
            <person name="Richardson P."/>
        </authorList>
    </citation>
    <scope>NUCLEOTIDE SEQUENCE [LARGE SCALE GENOMIC DNA]</scope>
    <source>
        <strain>ATCC 8739 / DSM 1576 / NBRC 3972 / NCIMB 8545 / WDCM 00012 / Crooks</strain>
    </source>
</reference>
<gene>
    <name evidence="1" type="primary">deoB</name>
    <name type="ordered locus">EcolC_3673</name>
</gene>
<name>DEOB_ECOLC</name>
<sequence>MKRAFIMVLDSFGIGATEDAERFGDVGADTLGHIAEACAKGEADNGRKGPLNLPNLTRLGLAKAHEGSTGFIPAGMDGNAEVIGAYAWAHEMSSGKDTPSGHWEIAGVPVLFEWGYFSDHENSFPQELLDKLVERANLPGYLGNCHSSGTVILDQLGEEHMKTGKPIFYTSADSVFQIACHEETFGLDKLYELCEIAREELTNGGYNIGRVIARPFIGDKAGNFQRTGNRHDLAVEPPAPTVLQKLVDEKHGQVVSVGKIADIYANCGITKKVKATGLDALFDATIKEMKEAGDNTIVFTNFVDFDSSWGHRRDVAGYAAGLELFDRRLPELMSLLRDDDILILTADHGCDPTWTGTDHTREHIPVLVYGPKVKPGSLGHRETFADIGQTLAKYFGTSDMEYGKAMF</sequence>
<keyword id="KW-0963">Cytoplasm</keyword>
<keyword id="KW-0413">Isomerase</keyword>
<keyword id="KW-0464">Manganese</keyword>
<keyword id="KW-0479">Metal-binding</keyword>
<proteinExistence type="inferred from homology"/>
<accession>B1IS36</accession>
<protein>
    <recommendedName>
        <fullName evidence="1">Phosphopentomutase</fullName>
        <ecNumber evidence="1">5.4.2.7</ecNumber>
    </recommendedName>
    <alternativeName>
        <fullName evidence="1">Phosphodeoxyribomutase</fullName>
    </alternativeName>
</protein>
<dbReference type="EC" id="5.4.2.7" evidence="1"/>
<dbReference type="EMBL" id="CP000946">
    <property type="protein sequence ID" value="ACA79284.1"/>
    <property type="molecule type" value="Genomic_DNA"/>
</dbReference>
<dbReference type="RefSeq" id="WP_000816471.1">
    <property type="nucleotide sequence ID" value="NZ_MTFT01000024.1"/>
</dbReference>
<dbReference type="SMR" id="B1IS36"/>
<dbReference type="GeneID" id="89519362"/>
<dbReference type="KEGG" id="ecl:EcolC_3673"/>
<dbReference type="HOGENOM" id="CLU_053861_0_0_6"/>
<dbReference type="UniPathway" id="UPA00002">
    <property type="reaction ID" value="UER00467"/>
</dbReference>
<dbReference type="GO" id="GO:0005829">
    <property type="term" value="C:cytosol"/>
    <property type="evidence" value="ECO:0007669"/>
    <property type="project" value="TreeGrafter"/>
</dbReference>
<dbReference type="GO" id="GO:0000287">
    <property type="term" value="F:magnesium ion binding"/>
    <property type="evidence" value="ECO:0007669"/>
    <property type="project" value="InterPro"/>
</dbReference>
<dbReference type="GO" id="GO:0030145">
    <property type="term" value="F:manganese ion binding"/>
    <property type="evidence" value="ECO:0007669"/>
    <property type="project" value="UniProtKB-UniRule"/>
</dbReference>
<dbReference type="GO" id="GO:0008973">
    <property type="term" value="F:phosphopentomutase activity"/>
    <property type="evidence" value="ECO:0007669"/>
    <property type="project" value="UniProtKB-UniRule"/>
</dbReference>
<dbReference type="GO" id="GO:0006018">
    <property type="term" value="P:2-deoxyribose 1-phosphate catabolic process"/>
    <property type="evidence" value="ECO:0007669"/>
    <property type="project" value="UniProtKB-UniRule"/>
</dbReference>
<dbReference type="GO" id="GO:0006015">
    <property type="term" value="P:5-phosphoribose 1-diphosphate biosynthetic process"/>
    <property type="evidence" value="ECO:0007669"/>
    <property type="project" value="UniProtKB-UniPathway"/>
</dbReference>
<dbReference type="GO" id="GO:0043094">
    <property type="term" value="P:metabolic compound salvage"/>
    <property type="evidence" value="ECO:0007669"/>
    <property type="project" value="InterPro"/>
</dbReference>
<dbReference type="GO" id="GO:0009117">
    <property type="term" value="P:nucleotide metabolic process"/>
    <property type="evidence" value="ECO:0007669"/>
    <property type="project" value="InterPro"/>
</dbReference>
<dbReference type="CDD" id="cd16009">
    <property type="entry name" value="PPM"/>
    <property type="match status" value="1"/>
</dbReference>
<dbReference type="FunFam" id="3.30.70.1250:FF:000001">
    <property type="entry name" value="Phosphopentomutase"/>
    <property type="match status" value="1"/>
</dbReference>
<dbReference type="Gene3D" id="3.40.720.10">
    <property type="entry name" value="Alkaline Phosphatase, subunit A"/>
    <property type="match status" value="1"/>
</dbReference>
<dbReference type="Gene3D" id="3.30.70.1250">
    <property type="entry name" value="Phosphopentomutase"/>
    <property type="match status" value="1"/>
</dbReference>
<dbReference type="HAMAP" id="MF_00740">
    <property type="entry name" value="Phosphopentomut"/>
    <property type="match status" value="1"/>
</dbReference>
<dbReference type="InterPro" id="IPR017850">
    <property type="entry name" value="Alkaline_phosphatase_core_sf"/>
</dbReference>
<dbReference type="InterPro" id="IPR010045">
    <property type="entry name" value="DeoB"/>
</dbReference>
<dbReference type="InterPro" id="IPR006124">
    <property type="entry name" value="Metalloenzyme"/>
</dbReference>
<dbReference type="InterPro" id="IPR024052">
    <property type="entry name" value="Phosphopentomutase_DeoB_cap_sf"/>
</dbReference>
<dbReference type="NCBIfam" id="TIGR01696">
    <property type="entry name" value="deoB"/>
    <property type="match status" value="1"/>
</dbReference>
<dbReference type="NCBIfam" id="NF003766">
    <property type="entry name" value="PRK05362.1"/>
    <property type="match status" value="1"/>
</dbReference>
<dbReference type="PANTHER" id="PTHR21110">
    <property type="entry name" value="PHOSPHOPENTOMUTASE"/>
    <property type="match status" value="1"/>
</dbReference>
<dbReference type="PANTHER" id="PTHR21110:SF0">
    <property type="entry name" value="PHOSPHOPENTOMUTASE"/>
    <property type="match status" value="1"/>
</dbReference>
<dbReference type="Pfam" id="PF01676">
    <property type="entry name" value="Metalloenzyme"/>
    <property type="match status" value="1"/>
</dbReference>
<dbReference type="PIRSF" id="PIRSF001491">
    <property type="entry name" value="Ppentomutase"/>
    <property type="match status" value="1"/>
</dbReference>
<dbReference type="SUPFAM" id="SSF53649">
    <property type="entry name" value="Alkaline phosphatase-like"/>
    <property type="match status" value="1"/>
</dbReference>
<dbReference type="SUPFAM" id="SSF143856">
    <property type="entry name" value="DeoB insert domain-like"/>
    <property type="match status" value="1"/>
</dbReference>
<organism>
    <name type="scientific">Escherichia coli (strain ATCC 8739 / DSM 1576 / NBRC 3972 / NCIMB 8545 / WDCM 00012 / Crooks)</name>
    <dbReference type="NCBI Taxonomy" id="481805"/>
    <lineage>
        <taxon>Bacteria</taxon>
        <taxon>Pseudomonadati</taxon>
        <taxon>Pseudomonadota</taxon>
        <taxon>Gammaproteobacteria</taxon>
        <taxon>Enterobacterales</taxon>
        <taxon>Enterobacteriaceae</taxon>
        <taxon>Escherichia</taxon>
    </lineage>
</organism>
<evidence type="ECO:0000255" key="1">
    <source>
        <dbReference type="HAMAP-Rule" id="MF_00740"/>
    </source>
</evidence>
<comment type="function">
    <text evidence="1">Isomerase that catalyzes the conversion of deoxy-ribose 1-phosphate (dRib-1-P) and ribose 1-phosphate (Rib-1-P) to deoxy-ribose 5-phosphate (dRib-5-P) and ribose 5-phosphate (Rib-5-P), respectively.</text>
</comment>
<comment type="catalytic activity">
    <reaction evidence="1">
        <text>2-deoxy-alpha-D-ribose 1-phosphate = 2-deoxy-D-ribose 5-phosphate</text>
        <dbReference type="Rhea" id="RHEA:27658"/>
        <dbReference type="ChEBI" id="CHEBI:57259"/>
        <dbReference type="ChEBI" id="CHEBI:62877"/>
        <dbReference type="EC" id="5.4.2.7"/>
    </reaction>
</comment>
<comment type="catalytic activity">
    <reaction evidence="1">
        <text>alpha-D-ribose 1-phosphate = D-ribose 5-phosphate</text>
        <dbReference type="Rhea" id="RHEA:18793"/>
        <dbReference type="ChEBI" id="CHEBI:57720"/>
        <dbReference type="ChEBI" id="CHEBI:78346"/>
        <dbReference type="EC" id="5.4.2.7"/>
    </reaction>
</comment>
<comment type="cofactor">
    <cofactor evidence="1">
        <name>Mn(2+)</name>
        <dbReference type="ChEBI" id="CHEBI:29035"/>
    </cofactor>
    <text evidence="1">Binds 2 manganese ions.</text>
</comment>
<comment type="pathway">
    <text evidence="1">Carbohydrate degradation; 2-deoxy-D-ribose 1-phosphate degradation; D-glyceraldehyde 3-phosphate and acetaldehyde from 2-deoxy-alpha-D-ribose 1-phosphate: step 1/2.</text>
</comment>
<comment type="subcellular location">
    <subcellularLocation>
        <location evidence="1">Cytoplasm</location>
    </subcellularLocation>
</comment>
<comment type="similarity">
    <text evidence="1">Belongs to the phosphopentomutase family.</text>
</comment>